<reference key="1">
    <citation type="journal article" date="1995" name="FEBS Lett.">
        <title>Multiple isoforms of Pisum trypsin inhibitors result from modification of two primary gene products.</title>
        <authorList>
            <person name="Domoney C."/>
            <person name="Welham T."/>
            <person name="Sidebottom C."/>
            <person name="Firmin J.-L."/>
        </authorList>
    </citation>
    <scope>NUCLEOTIDE SEQUENCE [MRNA]</scope>
    <source>
        <strain>cv. Birte</strain>
    </source>
</reference>
<name>IBB2_PEA</name>
<proteinExistence type="evidence at transcript level"/>
<sequence>MELMNKKVMMKLALMVFLLSFAANVVNARFDSTSFITQVLSNGDDVKSACCDTCLCTKSDPPTCRCVDVGETCHSACDSCICALSYPPQCQCFDTHKFCYKACHNSEVEEVIKN</sequence>
<gene>
    <name type="primary">TI572</name>
</gene>
<comment type="function">
    <text>Inhibitor of trypsin and of chymotrypsin. May function as a natural phytochemical defense against predators.</text>
</comment>
<comment type="tissue specificity">
    <text>Seed.</text>
</comment>
<comment type="similarity">
    <text evidence="4">Belongs to the Bowman-Birk serine protease inhibitor family.</text>
</comment>
<organism>
    <name type="scientific">Pisum sativum</name>
    <name type="common">Garden pea</name>
    <name type="synonym">Lathyrus oleraceus</name>
    <dbReference type="NCBI Taxonomy" id="3888"/>
    <lineage>
        <taxon>Eukaryota</taxon>
        <taxon>Viridiplantae</taxon>
        <taxon>Streptophyta</taxon>
        <taxon>Embryophyta</taxon>
        <taxon>Tracheophyta</taxon>
        <taxon>Spermatophyta</taxon>
        <taxon>Magnoliopsida</taxon>
        <taxon>eudicotyledons</taxon>
        <taxon>Gunneridae</taxon>
        <taxon>Pentapetalae</taxon>
        <taxon>rosids</taxon>
        <taxon>fabids</taxon>
        <taxon>Fabales</taxon>
        <taxon>Fabaceae</taxon>
        <taxon>Papilionoideae</taxon>
        <taxon>50 kb inversion clade</taxon>
        <taxon>NPAAA clade</taxon>
        <taxon>Hologalegina</taxon>
        <taxon>IRL clade</taxon>
        <taxon>Fabeae</taxon>
        <taxon>Pisum</taxon>
    </lineage>
</organism>
<evidence type="ECO:0000250" key="1"/>
<evidence type="ECO:0000250" key="2">
    <source>
        <dbReference type="UniProtKB" id="P80321"/>
    </source>
</evidence>
<evidence type="ECO:0000255" key="3"/>
<evidence type="ECO:0000305" key="4"/>
<dbReference type="EMBL" id="X83210">
    <property type="protein sequence ID" value="CAA58212.1"/>
    <property type="molecule type" value="mRNA"/>
</dbReference>
<dbReference type="PIR" id="S69006">
    <property type="entry name" value="S69006"/>
</dbReference>
<dbReference type="SMR" id="Q41066"/>
<dbReference type="MEROPS" id="I12.018"/>
<dbReference type="GO" id="GO:0005576">
    <property type="term" value="C:extracellular region"/>
    <property type="evidence" value="ECO:0007669"/>
    <property type="project" value="InterPro"/>
</dbReference>
<dbReference type="GO" id="GO:0004867">
    <property type="term" value="F:serine-type endopeptidase inhibitor activity"/>
    <property type="evidence" value="ECO:0007669"/>
    <property type="project" value="UniProtKB-KW"/>
</dbReference>
<dbReference type="CDD" id="cd00023">
    <property type="entry name" value="BBI"/>
    <property type="match status" value="1"/>
</dbReference>
<dbReference type="FunFam" id="2.10.69.10:FF:000001">
    <property type="entry name" value="Bowman-Birk type proteinase inhibitor"/>
    <property type="match status" value="1"/>
</dbReference>
<dbReference type="Gene3D" id="2.10.69.10">
    <property type="entry name" value="Cysteine Protease (Bromelain) Inhibitor, subunit H"/>
    <property type="match status" value="1"/>
</dbReference>
<dbReference type="InterPro" id="IPR035995">
    <property type="entry name" value="Bowman-Birk_prot_inh"/>
</dbReference>
<dbReference type="InterPro" id="IPR000877">
    <property type="entry name" value="Prot_inh_BBI"/>
</dbReference>
<dbReference type="PANTHER" id="PTHR33479">
    <property type="entry name" value="BOWMAN-BIRK TYPE BRAN TRYPSIN INHIBITOR"/>
    <property type="match status" value="1"/>
</dbReference>
<dbReference type="PANTHER" id="PTHR33479:SF18">
    <property type="entry name" value="INHIBITOR, PUTATIVE-RELATED"/>
    <property type="match status" value="1"/>
</dbReference>
<dbReference type="Pfam" id="PF00228">
    <property type="entry name" value="Bowman-Birk_leg"/>
    <property type="match status" value="2"/>
</dbReference>
<dbReference type="SMART" id="SM00269">
    <property type="entry name" value="BowB"/>
    <property type="match status" value="1"/>
</dbReference>
<dbReference type="SUPFAM" id="SSF57247">
    <property type="entry name" value="Bowman-Birk inhibitor, BBI"/>
    <property type="match status" value="1"/>
</dbReference>
<dbReference type="PROSITE" id="PS00281">
    <property type="entry name" value="BOWMAN_BIRK"/>
    <property type="match status" value="1"/>
</dbReference>
<accession>Q41066</accession>
<keyword id="KW-1015">Disulfide bond</keyword>
<keyword id="KW-0646">Protease inhibitor</keyword>
<keyword id="KW-0722">Serine protease inhibitor</keyword>
<keyword id="KW-0732">Signal</keyword>
<protein>
    <recommendedName>
        <fullName>Seed trypsin/chymotrypsin inhibitor TI5-72</fullName>
    </recommendedName>
</protein>
<feature type="signal peptide" evidence="3">
    <location>
        <begin position="1"/>
        <end position="28"/>
    </location>
</feature>
<feature type="propeptide" id="PRO_0000003278" evidence="3">
    <location>
        <begin position="29"/>
        <end position="42"/>
    </location>
</feature>
<feature type="chain" id="PRO_0000003279" description="Seed trypsin/chymotrypsin inhibitor TI5-72">
    <location>
        <begin position="43"/>
        <end position="114"/>
    </location>
</feature>
<feature type="site" description="Reactive bond for trypsin" evidence="1">
    <location>
        <begin position="58"/>
        <end position="59"/>
    </location>
</feature>
<feature type="site" description="Reactive bond for chymotrypsin" evidence="1">
    <location>
        <begin position="84"/>
        <end position="85"/>
    </location>
</feature>
<feature type="disulfide bond" evidence="2">
    <location>
        <begin position="50"/>
        <end position="103"/>
    </location>
</feature>
<feature type="disulfide bond" evidence="2">
    <location>
        <begin position="51"/>
        <end position="66"/>
    </location>
</feature>
<feature type="disulfide bond" evidence="2">
    <location>
        <begin position="54"/>
        <end position="99"/>
    </location>
</feature>
<feature type="disulfide bond" evidence="2">
    <location>
        <begin position="56"/>
        <end position="64"/>
    </location>
</feature>
<feature type="disulfide bond" evidence="2">
    <location>
        <begin position="73"/>
        <end position="80"/>
    </location>
</feature>
<feature type="disulfide bond" evidence="2">
    <location>
        <begin position="77"/>
        <end position="92"/>
    </location>
</feature>
<feature type="disulfide bond" evidence="2">
    <location>
        <begin position="82"/>
        <end position="90"/>
    </location>
</feature>